<feature type="chain" id="PRO_1000199233" description="Leucine--tRNA ligase">
    <location>
        <begin position="1"/>
        <end position="858"/>
    </location>
</feature>
<feature type="short sequence motif" description="'HIGH' region">
    <location>
        <begin position="42"/>
        <end position="52"/>
    </location>
</feature>
<feature type="short sequence motif" description="'KMSKS' region">
    <location>
        <begin position="618"/>
        <end position="622"/>
    </location>
</feature>
<feature type="binding site" evidence="1">
    <location>
        <position position="621"/>
    </location>
    <ligand>
        <name>ATP</name>
        <dbReference type="ChEBI" id="CHEBI:30616"/>
    </ligand>
</feature>
<name>SYL_VIBA3</name>
<comment type="catalytic activity">
    <reaction evidence="1">
        <text>tRNA(Leu) + L-leucine + ATP = L-leucyl-tRNA(Leu) + AMP + diphosphate</text>
        <dbReference type="Rhea" id="RHEA:11688"/>
        <dbReference type="Rhea" id="RHEA-COMP:9613"/>
        <dbReference type="Rhea" id="RHEA-COMP:9622"/>
        <dbReference type="ChEBI" id="CHEBI:30616"/>
        <dbReference type="ChEBI" id="CHEBI:33019"/>
        <dbReference type="ChEBI" id="CHEBI:57427"/>
        <dbReference type="ChEBI" id="CHEBI:78442"/>
        <dbReference type="ChEBI" id="CHEBI:78494"/>
        <dbReference type="ChEBI" id="CHEBI:456215"/>
        <dbReference type="EC" id="6.1.1.4"/>
    </reaction>
</comment>
<comment type="subcellular location">
    <subcellularLocation>
        <location evidence="1">Cytoplasm</location>
    </subcellularLocation>
</comment>
<comment type="similarity">
    <text evidence="1">Belongs to the class-I aminoacyl-tRNA synthetase family.</text>
</comment>
<protein>
    <recommendedName>
        <fullName evidence="1">Leucine--tRNA ligase</fullName>
        <ecNumber evidence="1">6.1.1.4</ecNumber>
    </recommendedName>
    <alternativeName>
        <fullName evidence="1">Leucyl-tRNA synthetase</fullName>
        <shortName evidence="1">LeuRS</shortName>
    </alternativeName>
</protein>
<organism>
    <name type="scientific">Vibrio atlanticus (strain LGP32)</name>
    <name type="common">Vibrio splendidus (strain Mel32)</name>
    <dbReference type="NCBI Taxonomy" id="575788"/>
    <lineage>
        <taxon>Bacteria</taxon>
        <taxon>Pseudomonadati</taxon>
        <taxon>Pseudomonadota</taxon>
        <taxon>Gammaproteobacteria</taxon>
        <taxon>Vibrionales</taxon>
        <taxon>Vibrionaceae</taxon>
        <taxon>Vibrio</taxon>
    </lineage>
</organism>
<evidence type="ECO:0000255" key="1">
    <source>
        <dbReference type="HAMAP-Rule" id="MF_00049"/>
    </source>
</evidence>
<accession>B7VKF7</accession>
<keyword id="KW-0030">Aminoacyl-tRNA synthetase</keyword>
<keyword id="KW-0067">ATP-binding</keyword>
<keyword id="KW-0963">Cytoplasm</keyword>
<keyword id="KW-0436">Ligase</keyword>
<keyword id="KW-0547">Nucleotide-binding</keyword>
<keyword id="KW-0648">Protein biosynthesis</keyword>
<reference key="1">
    <citation type="submission" date="2009-02" db="EMBL/GenBank/DDBJ databases">
        <title>Vibrio splendidus str. LGP32 complete genome.</title>
        <authorList>
            <person name="Mazel D."/>
            <person name="Le Roux F."/>
        </authorList>
    </citation>
    <scope>NUCLEOTIDE SEQUENCE [LARGE SCALE GENOMIC DNA]</scope>
    <source>
        <strain>LGP32</strain>
    </source>
</reference>
<dbReference type="EC" id="6.1.1.4" evidence="1"/>
<dbReference type="EMBL" id="FM954972">
    <property type="protein sequence ID" value="CAV17713.1"/>
    <property type="molecule type" value="Genomic_DNA"/>
</dbReference>
<dbReference type="SMR" id="B7VKF7"/>
<dbReference type="STRING" id="575788.VS_0718"/>
<dbReference type="KEGG" id="vsp:VS_0718"/>
<dbReference type="PATRIC" id="fig|575788.5.peg.2066"/>
<dbReference type="eggNOG" id="COG0495">
    <property type="taxonomic scope" value="Bacteria"/>
</dbReference>
<dbReference type="HOGENOM" id="CLU_004427_0_0_6"/>
<dbReference type="Proteomes" id="UP000009100">
    <property type="component" value="Chromosome 1"/>
</dbReference>
<dbReference type="GO" id="GO:0005829">
    <property type="term" value="C:cytosol"/>
    <property type="evidence" value="ECO:0007669"/>
    <property type="project" value="TreeGrafter"/>
</dbReference>
<dbReference type="GO" id="GO:0002161">
    <property type="term" value="F:aminoacyl-tRNA deacylase activity"/>
    <property type="evidence" value="ECO:0007669"/>
    <property type="project" value="InterPro"/>
</dbReference>
<dbReference type="GO" id="GO:0005524">
    <property type="term" value="F:ATP binding"/>
    <property type="evidence" value="ECO:0007669"/>
    <property type="project" value="UniProtKB-UniRule"/>
</dbReference>
<dbReference type="GO" id="GO:0004823">
    <property type="term" value="F:leucine-tRNA ligase activity"/>
    <property type="evidence" value="ECO:0007669"/>
    <property type="project" value="UniProtKB-UniRule"/>
</dbReference>
<dbReference type="GO" id="GO:0006429">
    <property type="term" value="P:leucyl-tRNA aminoacylation"/>
    <property type="evidence" value="ECO:0007669"/>
    <property type="project" value="UniProtKB-UniRule"/>
</dbReference>
<dbReference type="CDD" id="cd07958">
    <property type="entry name" value="Anticodon_Ia_Leu_BEm"/>
    <property type="match status" value="1"/>
</dbReference>
<dbReference type="CDD" id="cd00812">
    <property type="entry name" value="LeuRS_core"/>
    <property type="match status" value="1"/>
</dbReference>
<dbReference type="FunFam" id="1.10.730.10:FF:000002">
    <property type="entry name" value="Leucine--tRNA ligase"/>
    <property type="match status" value="1"/>
</dbReference>
<dbReference type="FunFam" id="2.20.28.290:FF:000001">
    <property type="entry name" value="Leucine--tRNA ligase"/>
    <property type="match status" value="1"/>
</dbReference>
<dbReference type="FunFam" id="3.10.20.590:FF:000001">
    <property type="entry name" value="Leucine--tRNA ligase"/>
    <property type="match status" value="1"/>
</dbReference>
<dbReference type="FunFam" id="3.40.50.620:FF:000003">
    <property type="entry name" value="Leucine--tRNA ligase"/>
    <property type="match status" value="1"/>
</dbReference>
<dbReference type="FunFam" id="3.40.50.620:FF:000051">
    <property type="entry name" value="Leucine--tRNA ligase"/>
    <property type="match status" value="1"/>
</dbReference>
<dbReference type="FunFam" id="3.90.740.10:FF:000012">
    <property type="entry name" value="Leucine--tRNA ligase"/>
    <property type="match status" value="1"/>
</dbReference>
<dbReference type="Gene3D" id="2.20.28.290">
    <property type="match status" value="1"/>
</dbReference>
<dbReference type="Gene3D" id="3.10.20.590">
    <property type="match status" value="1"/>
</dbReference>
<dbReference type="Gene3D" id="3.40.50.620">
    <property type="entry name" value="HUPs"/>
    <property type="match status" value="2"/>
</dbReference>
<dbReference type="Gene3D" id="1.10.730.10">
    <property type="entry name" value="Isoleucyl-tRNA Synthetase, Domain 1"/>
    <property type="match status" value="1"/>
</dbReference>
<dbReference type="HAMAP" id="MF_00049_B">
    <property type="entry name" value="Leu_tRNA_synth_B"/>
    <property type="match status" value="1"/>
</dbReference>
<dbReference type="InterPro" id="IPR001412">
    <property type="entry name" value="aa-tRNA-synth_I_CS"/>
</dbReference>
<dbReference type="InterPro" id="IPR002300">
    <property type="entry name" value="aa-tRNA-synth_Ia"/>
</dbReference>
<dbReference type="InterPro" id="IPR002302">
    <property type="entry name" value="Leu-tRNA-ligase"/>
</dbReference>
<dbReference type="InterPro" id="IPR025709">
    <property type="entry name" value="Leu_tRNA-synth_edit"/>
</dbReference>
<dbReference type="InterPro" id="IPR013155">
    <property type="entry name" value="M/V/L/I-tRNA-synth_anticd-bd"/>
</dbReference>
<dbReference type="InterPro" id="IPR015413">
    <property type="entry name" value="Methionyl/Leucyl_tRNA_Synth"/>
</dbReference>
<dbReference type="InterPro" id="IPR014729">
    <property type="entry name" value="Rossmann-like_a/b/a_fold"/>
</dbReference>
<dbReference type="InterPro" id="IPR009080">
    <property type="entry name" value="tRNAsynth_Ia_anticodon-bd"/>
</dbReference>
<dbReference type="InterPro" id="IPR009008">
    <property type="entry name" value="Val/Leu/Ile-tRNA-synth_edit"/>
</dbReference>
<dbReference type="NCBIfam" id="TIGR00396">
    <property type="entry name" value="leuS_bact"/>
    <property type="match status" value="1"/>
</dbReference>
<dbReference type="PANTHER" id="PTHR43740:SF2">
    <property type="entry name" value="LEUCINE--TRNA LIGASE, MITOCHONDRIAL"/>
    <property type="match status" value="1"/>
</dbReference>
<dbReference type="PANTHER" id="PTHR43740">
    <property type="entry name" value="LEUCYL-TRNA SYNTHETASE"/>
    <property type="match status" value="1"/>
</dbReference>
<dbReference type="Pfam" id="PF08264">
    <property type="entry name" value="Anticodon_1"/>
    <property type="match status" value="1"/>
</dbReference>
<dbReference type="Pfam" id="PF00133">
    <property type="entry name" value="tRNA-synt_1"/>
    <property type="match status" value="2"/>
</dbReference>
<dbReference type="Pfam" id="PF13603">
    <property type="entry name" value="tRNA-synt_1_2"/>
    <property type="match status" value="1"/>
</dbReference>
<dbReference type="Pfam" id="PF09334">
    <property type="entry name" value="tRNA-synt_1g"/>
    <property type="match status" value="1"/>
</dbReference>
<dbReference type="PRINTS" id="PR00985">
    <property type="entry name" value="TRNASYNTHLEU"/>
</dbReference>
<dbReference type="SUPFAM" id="SSF47323">
    <property type="entry name" value="Anticodon-binding domain of a subclass of class I aminoacyl-tRNA synthetases"/>
    <property type="match status" value="1"/>
</dbReference>
<dbReference type="SUPFAM" id="SSF52374">
    <property type="entry name" value="Nucleotidylyl transferase"/>
    <property type="match status" value="1"/>
</dbReference>
<dbReference type="SUPFAM" id="SSF50677">
    <property type="entry name" value="ValRS/IleRS/LeuRS editing domain"/>
    <property type="match status" value="1"/>
</dbReference>
<dbReference type="PROSITE" id="PS00178">
    <property type="entry name" value="AA_TRNA_LIGASE_I"/>
    <property type="match status" value="1"/>
</dbReference>
<proteinExistence type="inferred from homology"/>
<sequence>MQEQYNPQEIEQKVQQHWDDSETFVVSEDPNKEKFYCLSMFPYPSGRLHMGHVRNYTIGDVVSRFQRLQGKNVMQPIGWDAFGLPAENAAVKNNTAPAPWTYENIEYMKNQLKLLGFGYDWKREFATCTPEYYRWEQEFFTKLYEQGLVYKKTSSVNWCPNDQTVLANEQVEDGCCWRCDTPVEQKKIPQWFIKITEYAQELLDDLDNLEGWPEMVKTMQRNWIGRSEGVELSFAVNGEEAPLEVYTTRPDTLMGVSYVGIAAGHPLAEKASKNNPELAAFVEECRNTKVAEAELATMEKKGMDTGLTAIHPLNGRVVPVYVANFVLMDYGTGAVMAVPAHDQRDYEFATKYGIDIIPVIKPEDGSELDVSEAAYTEKGVLFDSGEFDGLAFQEAFDAIAAKLEAEGKGKKTVNFRLRDWGVSRQRYWGAPIPMVTTEDGEVHPVPADQLPVILPEDVVMDGVTSPIKADKSWAETTFNGEPALRETDTFDTFMESSWYYARYCSPQADDILDPEKANYWLPVDQYVGGIEHACMHLLYSRFFHKLLRDAGYVTSDEPFKQLLCQGMVLADAFYHENEKGTKEWIAPTDVTVERDGKGRIEKAVDDQGREVEHSGMIKMSKSKNNGIDPQEMVDKYGADTVRLFMMFASPADMTLEWQESGVEGANRFLKRVWKLVHAHSSKGAAETVDASALSGNQKALRRDIHKTIAKVTDDIGRRQTFNTAIAAIMELMNKLAKAPQESVQDRAILDEALKAVVRMLYPMTPHISYEMWIALGESNVDSATWPTFDEKALVEDEKTIVVMINGKLRAKLTVAADATEEQVRELGLNDENAKKFLDGLTIRKVIFVPGKLLNIVAN</sequence>
<gene>
    <name evidence="1" type="primary">leuS</name>
    <name type="ordered locus">VS_0718</name>
</gene>